<evidence type="ECO:0000255" key="1">
    <source>
        <dbReference type="HAMAP-Rule" id="MF_00259"/>
    </source>
</evidence>
<gene>
    <name evidence="1" type="primary">gcvT</name>
    <name type="ordered locus">Teth39_1988</name>
</gene>
<protein>
    <recommendedName>
        <fullName evidence="1">Aminomethyltransferase</fullName>
        <ecNumber evidence="1">2.1.2.10</ecNumber>
    </recommendedName>
    <alternativeName>
        <fullName evidence="1">Glycine cleavage system T protein</fullName>
    </alternativeName>
</protein>
<accession>B0KD95</accession>
<comment type="function">
    <text evidence="1">The glycine cleavage system catalyzes the degradation of glycine.</text>
</comment>
<comment type="catalytic activity">
    <reaction evidence="1">
        <text>N(6)-[(R)-S(8)-aminomethyldihydrolipoyl]-L-lysyl-[protein] + (6S)-5,6,7,8-tetrahydrofolate = N(6)-[(R)-dihydrolipoyl]-L-lysyl-[protein] + (6R)-5,10-methylene-5,6,7,8-tetrahydrofolate + NH4(+)</text>
        <dbReference type="Rhea" id="RHEA:16945"/>
        <dbReference type="Rhea" id="RHEA-COMP:10475"/>
        <dbReference type="Rhea" id="RHEA-COMP:10492"/>
        <dbReference type="ChEBI" id="CHEBI:15636"/>
        <dbReference type="ChEBI" id="CHEBI:28938"/>
        <dbReference type="ChEBI" id="CHEBI:57453"/>
        <dbReference type="ChEBI" id="CHEBI:83100"/>
        <dbReference type="ChEBI" id="CHEBI:83143"/>
        <dbReference type="EC" id="2.1.2.10"/>
    </reaction>
</comment>
<comment type="subunit">
    <text evidence="1">The glycine cleavage system is composed of four proteins: P, T, L and H.</text>
</comment>
<comment type="similarity">
    <text evidence="1">Belongs to the GcvT family.</text>
</comment>
<name>GCST_THEP3</name>
<keyword id="KW-0032">Aminotransferase</keyword>
<keyword id="KW-1185">Reference proteome</keyword>
<keyword id="KW-0808">Transferase</keyword>
<dbReference type="EC" id="2.1.2.10" evidence="1"/>
<dbReference type="EMBL" id="CP000924">
    <property type="protein sequence ID" value="ABY95614.1"/>
    <property type="molecule type" value="Genomic_DNA"/>
</dbReference>
<dbReference type="RefSeq" id="WP_012269705.1">
    <property type="nucleotide sequence ID" value="NC_010321.1"/>
</dbReference>
<dbReference type="SMR" id="B0KD95"/>
<dbReference type="STRING" id="340099.Teth39_1988"/>
<dbReference type="KEGG" id="tpd:Teth39_1988"/>
<dbReference type="eggNOG" id="COG0404">
    <property type="taxonomic scope" value="Bacteria"/>
</dbReference>
<dbReference type="HOGENOM" id="CLU_007884_10_2_9"/>
<dbReference type="Proteomes" id="UP000002156">
    <property type="component" value="Chromosome"/>
</dbReference>
<dbReference type="GO" id="GO:0005829">
    <property type="term" value="C:cytosol"/>
    <property type="evidence" value="ECO:0007669"/>
    <property type="project" value="TreeGrafter"/>
</dbReference>
<dbReference type="GO" id="GO:0005960">
    <property type="term" value="C:glycine cleavage complex"/>
    <property type="evidence" value="ECO:0007669"/>
    <property type="project" value="InterPro"/>
</dbReference>
<dbReference type="GO" id="GO:0004047">
    <property type="term" value="F:aminomethyltransferase activity"/>
    <property type="evidence" value="ECO:0007669"/>
    <property type="project" value="UniProtKB-UniRule"/>
</dbReference>
<dbReference type="GO" id="GO:0008483">
    <property type="term" value="F:transaminase activity"/>
    <property type="evidence" value="ECO:0007669"/>
    <property type="project" value="UniProtKB-KW"/>
</dbReference>
<dbReference type="GO" id="GO:0019464">
    <property type="term" value="P:glycine decarboxylation via glycine cleavage system"/>
    <property type="evidence" value="ECO:0007669"/>
    <property type="project" value="UniProtKB-UniRule"/>
</dbReference>
<dbReference type="FunFam" id="2.40.30.110:FF:000003">
    <property type="entry name" value="Aminomethyltransferase"/>
    <property type="match status" value="1"/>
</dbReference>
<dbReference type="FunFam" id="3.30.70.1400:FF:000001">
    <property type="entry name" value="Aminomethyltransferase"/>
    <property type="match status" value="1"/>
</dbReference>
<dbReference type="FunFam" id="4.10.1250.10:FF:000001">
    <property type="entry name" value="Aminomethyltransferase"/>
    <property type="match status" value="1"/>
</dbReference>
<dbReference type="Gene3D" id="2.40.30.110">
    <property type="entry name" value="Aminomethyltransferase beta-barrel domains"/>
    <property type="match status" value="1"/>
</dbReference>
<dbReference type="Gene3D" id="3.30.70.1400">
    <property type="entry name" value="Aminomethyltransferase beta-barrel domains"/>
    <property type="match status" value="1"/>
</dbReference>
<dbReference type="Gene3D" id="4.10.1250.10">
    <property type="entry name" value="Aminomethyltransferase fragment"/>
    <property type="match status" value="1"/>
</dbReference>
<dbReference type="Gene3D" id="3.30.1360.120">
    <property type="entry name" value="Probable tRNA modification gtpase trme, domain 1"/>
    <property type="match status" value="1"/>
</dbReference>
<dbReference type="HAMAP" id="MF_00259">
    <property type="entry name" value="GcvT"/>
    <property type="match status" value="1"/>
</dbReference>
<dbReference type="InterPro" id="IPR006223">
    <property type="entry name" value="GCS_T"/>
</dbReference>
<dbReference type="InterPro" id="IPR022903">
    <property type="entry name" value="GCS_T_bac"/>
</dbReference>
<dbReference type="InterPro" id="IPR013977">
    <property type="entry name" value="GCST_C"/>
</dbReference>
<dbReference type="InterPro" id="IPR006222">
    <property type="entry name" value="GCV_T_N"/>
</dbReference>
<dbReference type="InterPro" id="IPR028896">
    <property type="entry name" value="GcvT/YgfZ/DmdA"/>
</dbReference>
<dbReference type="InterPro" id="IPR029043">
    <property type="entry name" value="GcvT/YgfZ_C"/>
</dbReference>
<dbReference type="InterPro" id="IPR027266">
    <property type="entry name" value="TrmE/GcvT_dom1"/>
</dbReference>
<dbReference type="NCBIfam" id="TIGR00528">
    <property type="entry name" value="gcvT"/>
    <property type="match status" value="1"/>
</dbReference>
<dbReference type="NCBIfam" id="NF001567">
    <property type="entry name" value="PRK00389.1"/>
    <property type="match status" value="1"/>
</dbReference>
<dbReference type="PANTHER" id="PTHR43757">
    <property type="entry name" value="AMINOMETHYLTRANSFERASE"/>
    <property type="match status" value="1"/>
</dbReference>
<dbReference type="PANTHER" id="PTHR43757:SF2">
    <property type="entry name" value="AMINOMETHYLTRANSFERASE, MITOCHONDRIAL"/>
    <property type="match status" value="1"/>
</dbReference>
<dbReference type="Pfam" id="PF01571">
    <property type="entry name" value="GCV_T"/>
    <property type="match status" value="1"/>
</dbReference>
<dbReference type="Pfam" id="PF08669">
    <property type="entry name" value="GCV_T_C"/>
    <property type="match status" value="1"/>
</dbReference>
<dbReference type="PIRSF" id="PIRSF006487">
    <property type="entry name" value="GcvT"/>
    <property type="match status" value="1"/>
</dbReference>
<dbReference type="SUPFAM" id="SSF101790">
    <property type="entry name" value="Aminomethyltransferase beta-barrel domain"/>
    <property type="match status" value="1"/>
</dbReference>
<dbReference type="SUPFAM" id="SSF103025">
    <property type="entry name" value="Folate-binding domain"/>
    <property type="match status" value="1"/>
</dbReference>
<sequence>MDNLKKTPLFDLYKKYNGKIIDFAGWALPVQFESIISEHEAVRNAAGLFDVSHMGEITVKGREAFNFLQNLITNDLSKLKDNQVFYTFMCNYNGGVVDDLLVYKYSDEHFLLVVNAANIEKDYKWMKDNKGVYEVEINNISDEISELAVQGPKAEEILQKLTYTDLSEIKFFYFKDNVKIAGIECLVSRTGYTGEDGFEIYMPNKYAVELWEKIIEVGKEYGLKPAGLGARDTLRFEAGLPLYGNELSEEITPLEAGFEFFVKFDKGNFIGKDALLKQKEEGLKRKIVGFEMIDNGIPRHGYEVRADNQKIGYVTTGYFSPTLKKNIGLALIDSKYAQLGNQIEIVIRNKPLKALIISKNFYKKNYKK</sequence>
<organism>
    <name type="scientific">Thermoanaerobacter pseudethanolicus (strain ATCC 33223 / 39E)</name>
    <name type="common">Clostridium thermohydrosulfuricum</name>
    <dbReference type="NCBI Taxonomy" id="340099"/>
    <lineage>
        <taxon>Bacteria</taxon>
        <taxon>Bacillati</taxon>
        <taxon>Bacillota</taxon>
        <taxon>Clostridia</taxon>
        <taxon>Thermoanaerobacterales</taxon>
        <taxon>Thermoanaerobacteraceae</taxon>
        <taxon>Thermoanaerobacter</taxon>
    </lineage>
</organism>
<proteinExistence type="inferred from homology"/>
<reference key="1">
    <citation type="submission" date="2008-01" db="EMBL/GenBank/DDBJ databases">
        <title>Complete sequence of Thermoanaerobacter pseudethanolicus 39E.</title>
        <authorList>
            <person name="Copeland A."/>
            <person name="Lucas S."/>
            <person name="Lapidus A."/>
            <person name="Barry K."/>
            <person name="Glavina del Rio T."/>
            <person name="Dalin E."/>
            <person name="Tice H."/>
            <person name="Pitluck S."/>
            <person name="Bruce D."/>
            <person name="Goodwin L."/>
            <person name="Saunders E."/>
            <person name="Brettin T."/>
            <person name="Detter J.C."/>
            <person name="Han C."/>
            <person name="Schmutz J."/>
            <person name="Larimer F."/>
            <person name="Land M."/>
            <person name="Hauser L."/>
            <person name="Kyrpides N."/>
            <person name="Lykidis A."/>
            <person name="Hemme C."/>
            <person name="Fields M.W."/>
            <person name="He Z."/>
            <person name="Zhou J."/>
            <person name="Richardson P."/>
        </authorList>
    </citation>
    <scope>NUCLEOTIDE SEQUENCE [LARGE SCALE GENOMIC DNA]</scope>
    <source>
        <strain>ATCC 33223 / DSM 2355 / 39E</strain>
    </source>
</reference>
<feature type="chain" id="PRO_1000114122" description="Aminomethyltransferase">
    <location>
        <begin position="1"/>
        <end position="368"/>
    </location>
</feature>